<proteinExistence type="inferred from homology"/>
<gene>
    <name evidence="1" type="primary">ade</name>
    <name type="ordered locus">RD1_0605</name>
</gene>
<evidence type="ECO:0000255" key="1">
    <source>
        <dbReference type="HAMAP-Rule" id="MF_01518"/>
    </source>
</evidence>
<keyword id="KW-0378">Hydrolase</keyword>
<keyword id="KW-0464">Manganese</keyword>
<keyword id="KW-1185">Reference proteome</keyword>
<name>ADEC_ROSDO</name>
<organism>
    <name type="scientific">Roseobacter denitrificans (strain ATCC 33942 / OCh 114)</name>
    <name type="common">Erythrobacter sp. (strain OCh 114)</name>
    <name type="synonym">Roseobacter denitrificans</name>
    <dbReference type="NCBI Taxonomy" id="375451"/>
    <lineage>
        <taxon>Bacteria</taxon>
        <taxon>Pseudomonadati</taxon>
        <taxon>Pseudomonadota</taxon>
        <taxon>Alphaproteobacteria</taxon>
        <taxon>Rhodobacterales</taxon>
        <taxon>Roseobacteraceae</taxon>
        <taxon>Roseobacter</taxon>
    </lineage>
</organism>
<protein>
    <recommendedName>
        <fullName evidence="1">Adenine deaminase</fullName>
        <shortName evidence="1">Adenase</shortName>
        <shortName evidence="1">Adenine aminase</shortName>
        <ecNumber evidence="1">3.5.4.2</ecNumber>
    </recommendedName>
</protein>
<comment type="catalytic activity">
    <reaction evidence="1">
        <text>adenine + H2O + H(+) = hypoxanthine + NH4(+)</text>
        <dbReference type="Rhea" id="RHEA:23688"/>
        <dbReference type="ChEBI" id="CHEBI:15377"/>
        <dbReference type="ChEBI" id="CHEBI:15378"/>
        <dbReference type="ChEBI" id="CHEBI:16708"/>
        <dbReference type="ChEBI" id="CHEBI:17368"/>
        <dbReference type="ChEBI" id="CHEBI:28938"/>
        <dbReference type="EC" id="3.5.4.2"/>
    </reaction>
</comment>
<comment type="cofactor">
    <cofactor evidence="1">
        <name>Mn(2+)</name>
        <dbReference type="ChEBI" id="CHEBI:29035"/>
    </cofactor>
</comment>
<comment type="similarity">
    <text evidence="1">Belongs to the metallo-dependent hydrolases superfamily. Adenine deaminase family.</text>
</comment>
<sequence length="600" mass="63867">MTHSPFPSWPDTAADLIAVATGRMAADMLIRGGKWVNVHTREVLDGYDVAIIRGRIACVVPDATNCTGPDTHMIRANGRYMIPGLCDGHMHIESGMLTPAEFARAVIPHGTTSMFTDPHEIANVLGLEGVRMMHDEALMQPVNIFTQMPSCAPSAPGLETTGFEITAADVADAMAWPGIVGLGEMMNFPGVSNADPKMLAEIAATQRAGKTVGGHYASPDLGPAFAGYIAGGPADDHEGTCEADAIARMRQGMRSMIRLGSAWYDVESQITAITEKGLDPRNMILCTDDCHSGTLVNDGHMNRVVRHAIECGCDPLVALQMATINTATHFGLEREIGSITPGRRADIILTSDLRTLPIETVIARGQVVAEDGHCLVECPHFDWPAAARQTVHMGKTLGPDDFTINAPKGANAVTANVIGVVENQAPTKALKFELPVTEGRVQATGDVAQIALVERHRATGSVTNAFVSGFGYQGRMAMASTVAHDSHHMIVVGTDADDMARAANRLGEVGGGIVLFKDGVELALVELPIAGLMSDRPAAEVAAKADKMMQAMRDCGCTLNNAYMQHSLLALVVIPELRISDLGLVDVRTFEFIPVIESPT</sequence>
<dbReference type="EC" id="3.5.4.2" evidence="1"/>
<dbReference type="EMBL" id="CP000362">
    <property type="protein sequence ID" value="ABG30305.1"/>
    <property type="molecule type" value="Genomic_DNA"/>
</dbReference>
<dbReference type="RefSeq" id="WP_011566927.1">
    <property type="nucleotide sequence ID" value="NC_008209.1"/>
</dbReference>
<dbReference type="SMR" id="Q16CI8"/>
<dbReference type="STRING" id="375451.RD1_0605"/>
<dbReference type="KEGG" id="rde:RD1_0605"/>
<dbReference type="eggNOG" id="COG1001">
    <property type="taxonomic scope" value="Bacteria"/>
</dbReference>
<dbReference type="HOGENOM" id="CLU_027935_0_0_5"/>
<dbReference type="OrthoDB" id="9775607at2"/>
<dbReference type="Proteomes" id="UP000007029">
    <property type="component" value="Chromosome"/>
</dbReference>
<dbReference type="GO" id="GO:0000034">
    <property type="term" value="F:adenine deaminase activity"/>
    <property type="evidence" value="ECO:0007669"/>
    <property type="project" value="UniProtKB-UniRule"/>
</dbReference>
<dbReference type="GO" id="GO:0006146">
    <property type="term" value="P:adenine catabolic process"/>
    <property type="evidence" value="ECO:0007669"/>
    <property type="project" value="InterPro"/>
</dbReference>
<dbReference type="CDD" id="cd01295">
    <property type="entry name" value="AdeC"/>
    <property type="match status" value="1"/>
</dbReference>
<dbReference type="Gene3D" id="3.20.20.140">
    <property type="entry name" value="Metal-dependent hydrolases"/>
    <property type="match status" value="1"/>
</dbReference>
<dbReference type="Gene3D" id="2.30.40.10">
    <property type="entry name" value="Urease, subunit C, domain 1"/>
    <property type="match status" value="1"/>
</dbReference>
<dbReference type="HAMAP" id="MF_01518">
    <property type="entry name" value="Adenine_deamin"/>
    <property type="match status" value="1"/>
</dbReference>
<dbReference type="InterPro" id="IPR006679">
    <property type="entry name" value="Adenine_deam"/>
</dbReference>
<dbReference type="InterPro" id="IPR026912">
    <property type="entry name" value="Adenine_deam_C"/>
</dbReference>
<dbReference type="InterPro" id="IPR006680">
    <property type="entry name" value="Amidohydro-rel"/>
</dbReference>
<dbReference type="InterPro" id="IPR011059">
    <property type="entry name" value="Metal-dep_hydrolase_composite"/>
</dbReference>
<dbReference type="InterPro" id="IPR032466">
    <property type="entry name" value="Metal_Hydrolase"/>
</dbReference>
<dbReference type="NCBIfam" id="TIGR01178">
    <property type="entry name" value="ade"/>
    <property type="match status" value="1"/>
</dbReference>
<dbReference type="PANTHER" id="PTHR11113:SF2">
    <property type="entry name" value="ADENINE DEAMINASE"/>
    <property type="match status" value="1"/>
</dbReference>
<dbReference type="PANTHER" id="PTHR11113">
    <property type="entry name" value="N-ACETYLGLUCOSAMINE-6-PHOSPHATE DEACETYLASE"/>
    <property type="match status" value="1"/>
</dbReference>
<dbReference type="Pfam" id="PF13382">
    <property type="entry name" value="Adenine_deam_C"/>
    <property type="match status" value="1"/>
</dbReference>
<dbReference type="Pfam" id="PF01979">
    <property type="entry name" value="Amidohydro_1"/>
    <property type="match status" value="1"/>
</dbReference>
<dbReference type="SUPFAM" id="SSF51338">
    <property type="entry name" value="Composite domain of metallo-dependent hydrolases"/>
    <property type="match status" value="1"/>
</dbReference>
<dbReference type="SUPFAM" id="SSF51556">
    <property type="entry name" value="Metallo-dependent hydrolases"/>
    <property type="match status" value="1"/>
</dbReference>
<feature type="chain" id="PRO_0000292397" description="Adenine deaminase">
    <location>
        <begin position="1"/>
        <end position="600"/>
    </location>
</feature>
<reference key="1">
    <citation type="journal article" date="2007" name="J. Bacteriol.">
        <title>The complete genome sequence of Roseobacter denitrificans reveals a mixotrophic rather than photosynthetic metabolism.</title>
        <authorList>
            <person name="Swingley W.D."/>
            <person name="Sadekar S."/>
            <person name="Mastrian S.D."/>
            <person name="Matthies H.J."/>
            <person name="Hao J."/>
            <person name="Ramos H."/>
            <person name="Acharya C.R."/>
            <person name="Conrad A.L."/>
            <person name="Taylor H.L."/>
            <person name="Dejesa L.C."/>
            <person name="Shah M.K."/>
            <person name="O'Huallachain M.E."/>
            <person name="Lince M.T."/>
            <person name="Blankenship R.E."/>
            <person name="Beatty J.T."/>
            <person name="Touchman J.W."/>
        </authorList>
    </citation>
    <scope>NUCLEOTIDE SEQUENCE [LARGE SCALE GENOMIC DNA]</scope>
    <source>
        <strain>ATCC 33942 / OCh 114</strain>
    </source>
</reference>
<accession>Q16CI8</accession>